<comment type="function">
    <text>May play a key role in regulating the relative amounts of cyclic and non-cyclic electron flow to meet the demands of the plant for ATP and reducing power.</text>
</comment>
<comment type="catalytic activity">
    <reaction>
        <text>2 reduced [2Fe-2S]-[ferredoxin] + NADP(+) + H(+) = 2 oxidized [2Fe-2S]-[ferredoxin] + NADPH</text>
        <dbReference type="Rhea" id="RHEA:20125"/>
        <dbReference type="Rhea" id="RHEA-COMP:10000"/>
        <dbReference type="Rhea" id="RHEA-COMP:10001"/>
        <dbReference type="ChEBI" id="CHEBI:15378"/>
        <dbReference type="ChEBI" id="CHEBI:33737"/>
        <dbReference type="ChEBI" id="CHEBI:33738"/>
        <dbReference type="ChEBI" id="CHEBI:57783"/>
        <dbReference type="ChEBI" id="CHEBI:58349"/>
        <dbReference type="EC" id="1.18.1.2"/>
    </reaction>
</comment>
<comment type="cofactor">
    <cofactor>
        <name>FAD</name>
        <dbReference type="ChEBI" id="CHEBI:57692"/>
    </cofactor>
</comment>
<comment type="biophysicochemical properties">
    <kinetics>
        <KM evidence="3">35 uM for NADPH</KM>
    </kinetics>
</comment>
<comment type="pathway">
    <text>Energy metabolism; photosynthesis.</text>
</comment>
<comment type="interaction">
    <interactant intactId="EBI-865079">
        <id>P00455</id>
    </interactant>
    <interactant intactId="EBI-864933">
        <id>P00221</id>
        <label>PETF</label>
    </interactant>
    <organismsDiffer>false</organismsDiffer>
    <experiments>3</experiments>
</comment>
<comment type="subcellular location">
    <subcellularLocation>
        <location>Plastid</location>
        <location>Chloroplast stroma</location>
    </subcellularLocation>
    <subcellularLocation>
        <location evidence="6">Plastid</location>
        <location evidence="6">Chloroplast thylakoid membrane</location>
        <topology evidence="6">Peripheral membrane protein</topology>
        <orientation evidence="6">Stromal side</orientation>
    </subcellularLocation>
    <text>In the vicinity of the photosystem I in the non-stacked and fringe portion of the membrane.</text>
</comment>
<comment type="miscellaneous">
    <text>FNR is probably attached to the membrane by a specific binding protein.</text>
</comment>
<comment type="similarity">
    <text evidence="6">Belongs to the ferredoxin--NADP reductase type 1 family.</text>
</comment>
<reference key="1">
    <citation type="journal article" date="1988" name="Curr. Genet.">
        <title>Analysis of cDNA clones encoding the entire precursor-polypeptide for ferredoxin:NADP+ oxidoreductase from spinach.</title>
        <authorList>
            <person name="Jansen T."/>
            <person name="Reilaender H."/>
            <person name="Steppuhn J."/>
            <person name="Herrmann R.G."/>
        </authorList>
    </citation>
    <scope>NUCLEOTIDE SEQUENCE [MRNA]</scope>
</reference>
<reference key="2">
    <citation type="submission" date="1992-02" db="EMBL/GenBank/DDBJ databases">
        <title>Cloning and sequencing of the cDNA for precursor ferredoxin-NADP+: oxidoreductase from spinach.</title>
        <authorList>
            <person name="Alter J.M."/>
            <person name="Patrie W.J."/>
        </authorList>
    </citation>
    <scope>NUCLEOTIDE SEQUENCE [MRNA]</scope>
</reference>
<reference key="3">
    <citation type="journal article" date="1984" name="Biochemistry">
        <title>Amino acid sequence of spinach ferredoxin:NADP+ oxidoreductase.</title>
        <authorList>
            <person name="Karplus P.A."/>
            <person name="Walsh K.A."/>
            <person name="Herriott J.R."/>
        </authorList>
    </citation>
    <scope>PROTEIN SEQUENCE OF 56-369</scope>
</reference>
<reference key="4">
    <citation type="journal article" date="1993" name="Mol. Gen. Genet.">
        <title>Characterization of the promoter from the single-copy gene encoding ferredoxin-NADP(+)-oxidoreductase from spinach.</title>
        <authorList>
            <person name="Oelmueller R."/>
            <person name="Bolle C."/>
            <person name="Tyagi A.K."/>
            <person name="Niekrawietz N."/>
            <person name="Breit S."/>
        </authorList>
    </citation>
    <scope>NUCLEOTIDE SEQUENCE [GENOMIC DNA] OF 1-120</scope>
</reference>
<reference key="5">
    <citation type="journal article" date="1991" name="Science">
        <title>Atomic structure of ferredoxin-NADP+ reductase: prototype for a structurally novel flavoenzyme family.</title>
        <authorList>
            <person name="Karplus P.A."/>
            <person name="Daniels M.J."/>
            <person name="Herriott J.R."/>
        </authorList>
    </citation>
    <scope>X-RAY CRYSTALLOGRAPHY (2.6 ANGSTROMS) IN COMPLEX WITH FAD AND 2-PHOSPHO-AMP</scope>
    <scope>BIOPHYSICOCHEMICAL PROPERTIES</scope>
</reference>
<reference key="6">
    <citation type="journal article" date="1998" name="J. Biol. Chem.">
        <title>Probing the function of the invariant glutamyl residue 312 in spinach ferredoxin-NADP+ reductase.</title>
        <authorList>
            <person name="Aliverti A."/>
            <person name="Deng Z."/>
            <person name="Ravasi D."/>
            <person name="Piubelli L."/>
            <person name="Karplus P.A."/>
            <person name="Zanetti G."/>
        </authorList>
    </citation>
    <scope>X-RAY CRYSTALLOGRAPHY (1.9 ANGSTROMS) OF 74-369 OF MUTANTS ALA/GLN/LEU-367 IN COMPLEX WITH FAD</scope>
    <scope>MUTAGENESIS OF GLU-367</scope>
    <source>
        <tissue>Leaf</tissue>
    </source>
</reference>
<proteinExistence type="evidence at protein level"/>
<keyword id="KW-0002">3D-structure</keyword>
<keyword id="KW-0150">Chloroplast</keyword>
<keyword id="KW-0903">Direct protein sequencing</keyword>
<keyword id="KW-0249">Electron transport</keyword>
<keyword id="KW-0274">FAD</keyword>
<keyword id="KW-0285">Flavoprotein</keyword>
<keyword id="KW-0472">Membrane</keyword>
<keyword id="KW-0521">NADP</keyword>
<keyword id="KW-0560">Oxidoreductase</keyword>
<keyword id="KW-0602">Photosynthesis</keyword>
<keyword id="KW-0934">Plastid</keyword>
<keyword id="KW-1185">Reference proteome</keyword>
<keyword id="KW-0793">Thylakoid</keyword>
<keyword id="KW-0809">Transit peptide</keyword>
<keyword id="KW-0813">Transport</keyword>
<sequence length="369" mass="41188">MTTAVTAAVSFPSTKTTSLSARSSSVISPDKISYKKVPLYYRNVSATGKMGPIRAQIASDVEAPPPAPAKVEKHSKKMEEGITVNKFKPKTPYVGRCLLNTKITGDDAPGETWHMVFSHEGEIPYREGQSVGVIPDGEDKNGKPHKLRLYSIASSALGDFGDAKSVSLCVKRLIYTNDAGETIKGVCSNFLCDLKPGAEVKLTGPVGKEMLMPKDPNATIIMLGTGTGIAPFRSFLWKMFFEKHDDYKFNGLAWLFLGVPTSSSLLYKEEFEKMKEKAPDNFRLDFAVSREQTNEKGEKMYIQTRMAQYAVELWEMLKKDNTYFYMCGLKGMEKGIDDIMVSLAAAEGIDWIEYKRQLKKAEQWNVEVY</sequence>
<accession>P00455</accession>
<evidence type="ECO:0000250" key="1"/>
<evidence type="ECO:0000255" key="2">
    <source>
        <dbReference type="PROSITE-ProRule" id="PRU00716"/>
    </source>
</evidence>
<evidence type="ECO:0000269" key="3">
    <source>
    </source>
</evidence>
<evidence type="ECO:0000269" key="4">
    <source>
    </source>
</evidence>
<evidence type="ECO:0000269" key="5">
    <source>
    </source>
</evidence>
<evidence type="ECO:0000305" key="6"/>
<evidence type="ECO:0007829" key="7">
    <source>
        <dbReference type="PDB" id="1FNB"/>
    </source>
</evidence>
<feature type="transit peptide" description="Chloroplast" evidence="4">
    <location>
        <begin position="1"/>
        <end position="55"/>
    </location>
</feature>
<feature type="chain" id="PRO_0000019412" description="Ferredoxin--NADP reductase, chloroplastic">
    <location>
        <begin position="56"/>
        <end position="369"/>
    </location>
</feature>
<feature type="domain" description="FAD-binding FR-type" evidence="2">
    <location>
        <begin position="90"/>
        <end position="212"/>
    </location>
</feature>
<feature type="binding site" evidence="3 5">
    <location>
        <begin position="148"/>
        <end position="151"/>
    </location>
    <ligand>
        <name>FAD</name>
        <dbReference type="ChEBI" id="CHEBI:57692"/>
    </ligand>
</feature>
<feature type="binding site" evidence="1">
    <location>
        <position position="151"/>
    </location>
    <ligand>
        <name>NADP(+)</name>
        <dbReference type="ChEBI" id="CHEBI:58349"/>
    </ligand>
</feature>
<feature type="binding site" evidence="3 5">
    <location>
        <begin position="169"/>
        <end position="171"/>
    </location>
    <ligand>
        <name>FAD</name>
        <dbReference type="ChEBI" id="CHEBI:57692"/>
    </ligand>
</feature>
<feature type="binding site">
    <location>
        <position position="171"/>
    </location>
    <ligand>
        <name>NADP(+)</name>
        <dbReference type="ChEBI" id="CHEBI:58349"/>
    </ligand>
</feature>
<feature type="binding site" evidence="3 5">
    <location>
        <position position="175"/>
    </location>
    <ligand>
        <name>FAD</name>
        <dbReference type="ChEBI" id="CHEBI:57692"/>
    </ligand>
</feature>
<feature type="binding site" evidence="3 5">
    <location>
        <begin position="186"/>
        <end position="188"/>
    </location>
    <ligand>
        <name>FAD</name>
        <dbReference type="ChEBI" id="CHEBI:57692"/>
    </ligand>
</feature>
<feature type="binding site" evidence="3 5">
    <location>
        <position position="227"/>
    </location>
    <ligand>
        <name>FAD</name>
        <dbReference type="ChEBI" id="CHEBI:57692"/>
    </ligand>
</feature>
<feature type="binding site" evidence="1">
    <location>
        <position position="227"/>
    </location>
    <ligand>
        <name>NADP(+)</name>
        <dbReference type="ChEBI" id="CHEBI:58349"/>
    </ligand>
</feature>
<feature type="binding site">
    <location>
        <begin position="259"/>
        <end position="260"/>
    </location>
    <ligand>
        <name>NADP(+)</name>
        <dbReference type="ChEBI" id="CHEBI:58349"/>
    </ligand>
</feature>
<feature type="binding site">
    <location>
        <begin position="289"/>
        <end position="290"/>
    </location>
    <ligand>
        <name>NADP(+)</name>
        <dbReference type="ChEBI" id="CHEBI:58349"/>
    </ligand>
</feature>
<feature type="binding site">
    <location>
        <begin position="299"/>
        <end position="301"/>
    </location>
    <ligand>
        <name>NADP(+)</name>
        <dbReference type="ChEBI" id="CHEBI:58349"/>
    </ligand>
</feature>
<feature type="binding site" evidence="1">
    <location>
        <begin position="328"/>
        <end position="329"/>
    </location>
    <ligand>
        <name>NADP(+)</name>
        <dbReference type="ChEBI" id="CHEBI:58349"/>
    </ligand>
</feature>
<feature type="binding site" evidence="1">
    <location>
        <position position="367"/>
    </location>
    <ligand>
        <name>NADP(+)</name>
        <dbReference type="ChEBI" id="CHEBI:58349"/>
    </ligand>
</feature>
<feature type="sequence variant">
    <original>F</original>
    <variation>V</variation>
    <location>
        <position position="324"/>
    </location>
</feature>
<feature type="mutagenesis site" description="Slightly reduced activity." evidence="5">
    <original>E</original>
    <variation>A</variation>
    <location>
        <position position="367"/>
    </location>
</feature>
<feature type="mutagenesis site" description="Reduced activity." evidence="5">
    <original>E</original>
    <variation>D</variation>
    <variation>Q</variation>
    <location>
        <position position="367"/>
    </location>
</feature>
<feature type="mutagenesis site" description="Reduces activity by 99%." evidence="5">
    <original>E</original>
    <variation>L</variation>
    <location>
        <position position="367"/>
    </location>
</feature>
<feature type="strand" evidence="7">
    <location>
        <begin position="76"/>
        <end position="78"/>
    </location>
</feature>
<feature type="strand" evidence="7">
    <location>
        <begin position="86"/>
        <end position="88"/>
    </location>
</feature>
<feature type="strand" evidence="7">
    <location>
        <begin position="93"/>
        <end position="102"/>
    </location>
</feature>
<feature type="strand" evidence="7">
    <location>
        <begin position="106"/>
        <end position="110"/>
    </location>
</feature>
<feature type="strand" evidence="7">
    <location>
        <begin position="112"/>
        <end position="118"/>
    </location>
</feature>
<feature type="strand" evidence="7">
    <location>
        <begin position="130"/>
        <end position="134"/>
    </location>
</feature>
<feature type="strand" evidence="7">
    <location>
        <begin position="136"/>
        <end position="138"/>
    </location>
</feature>
<feature type="strand" evidence="7">
    <location>
        <begin position="142"/>
        <end position="144"/>
    </location>
</feature>
<feature type="strand" evidence="7">
    <location>
        <begin position="148"/>
        <end position="151"/>
    </location>
</feature>
<feature type="strand" evidence="7">
    <location>
        <begin position="161"/>
        <end position="163"/>
    </location>
</feature>
<feature type="strand" evidence="7">
    <location>
        <begin position="165"/>
        <end position="171"/>
    </location>
</feature>
<feature type="strand" evidence="7">
    <location>
        <begin position="174"/>
        <end position="176"/>
    </location>
</feature>
<feature type="strand" evidence="7">
    <location>
        <begin position="182"/>
        <end position="184"/>
    </location>
</feature>
<feature type="helix" evidence="7">
    <location>
        <begin position="186"/>
        <end position="193"/>
    </location>
</feature>
<feature type="strand" evidence="7">
    <location>
        <begin position="199"/>
        <end position="206"/>
    </location>
</feature>
<feature type="strand" evidence="7">
    <location>
        <begin position="219"/>
        <end position="225"/>
    </location>
</feature>
<feature type="helix" evidence="7">
    <location>
        <begin position="226"/>
        <end position="229"/>
    </location>
</feature>
<feature type="helix" evidence="7">
    <location>
        <begin position="230"/>
        <end position="240"/>
    </location>
</feature>
<feature type="strand" evidence="7">
    <location>
        <begin position="251"/>
        <end position="261"/>
    </location>
</feature>
<feature type="helix" evidence="7">
    <location>
        <begin position="262"/>
        <end position="264"/>
    </location>
</feature>
<feature type="helix" evidence="7">
    <location>
        <begin position="268"/>
        <end position="277"/>
    </location>
</feature>
<feature type="turn" evidence="7">
    <location>
        <begin position="279"/>
        <end position="281"/>
    </location>
</feature>
<feature type="strand" evidence="7">
    <location>
        <begin position="282"/>
        <end position="288"/>
    </location>
</feature>
<feature type="turn" evidence="7">
    <location>
        <begin position="289"/>
        <end position="291"/>
    </location>
</feature>
<feature type="helix" evidence="7">
    <location>
        <begin position="302"/>
        <end position="307"/>
    </location>
</feature>
<feature type="helix" evidence="7">
    <location>
        <begin position="310"/>
        <end position="316"/>
    </location>
</feature>
<feature type="strand" evidence="7">
    <location>
        <begin position="322"/>
        <end position="329"/>
    </location>
</feature>
<feature type="helix" evidence="7">
    <location>
        <begin position="332"/>
        <end position="345"/>
    </location>
</feature>
<feature type="turn" evidence="7">
    <location>
        <begin position="346"/>
        <end position="348"/>
    </location>
</feature>
<feature type="helix" evidence="7">
    <location>
        <begin position="351"/>
        <end position="360"/>
    </location>
</feature>
<feature type="strand" evidence="7">
    <location>
        <begin position="364"/>
        <end position="369"/>
    </location>
</feature>
<gene>
    <name type="primary">PETH</name>
</gene>
<name>FENR_SPIOL</name>
<protein>
    <recommendedName>
        <fullName>Ferredoxin--NADP reductase, chloroplastic</fullName>
        <shortName>FNR</shortName>
        <ecNumber>1.18.1.2</ecNumber>
    </recommendedName>
</protein>
<dbReference type="EC" id="1.18.1.2"/>
<dbReference type="EMBL" id="X07981">
    <property type="protein sequence ID" value="CAA30791.1"/>
    <property type="molecule type" value="mRNA"/>
</dbReference>
<dbReference type="EMBL" id="M86349">
    <property type="protein sequence ID" value="AAA34029.1"/>
    <property type="molecule type" value="mRNA"/>
</dbReference>
<dbReference type="EMBL" id="X64351">
    <property type="protein sequence ID" value="CAA45703.1"/>
    <property type="molecule type" value="Genomic_DNA"/>
</dbReference>
<dbReference type="PIR" id="S00438">
    <property type="entry name" value="RDSPXX"/>
</dbReference>
<dbReference type="PDB" id="1BX0">
    <property type="method" value="X-ray"/>
    <property type="resolution" value="1.90 A"/>
    <property type="chains" value="A=56-369"/>
</dbReference>
<dbReference type="PDB" id="1BX1">
    <property type="method" value="X-ray"/>
    <property type="resolution" value="1.90 A"/>
    <property type="chains" value="A=56-369"/>
</dbReference>
<dbReference type="PDB" id="1FNB">
    <property type="method" value="X-ray"/>
    <property type="resolution" value="1.70 A"/>
    <property type="chains" value="A=56-369"/>
</dbReference>
<dbReference type="PDB" id="1FNC">
    <property type="method" value="X-ray"/>
    <property type="resolution" value="2.00 A"/>
    <property type="chains" value="A=56-369"/>
</dbReference>
<dbReference type="PDB" id="1FND">
    <property type="method" value="X-ray"/>
    <property type="resolution" value="1.70 A"/>
    <property type="chains" value="A=56-369"/>
</dbReference>
<dbReference type="PDB" id="1FRN">
    <property type="method" value="X-ray"/>
    <property type="resolution" value="2.00 A"/>
    <property type="chains" value="A=56-369"/>
</dbReference>
<dbReference type="PDB" id="1FRQ">
    <property type="method" value="X-ray"/>
    <property type="resolution" value="1.95 A"/>
    <property type="chains" value="A=56-369"/>
</dbReference>
<dbReference type="PDBsum" id="1BX0"/>
<dbReference type="PDBsum" id="1BX1"/>
<dbReference type="PDBsum" id="1FNB"/>
<dbReference type="PDBsum" id="1FNC"/>
<dbReference type="PDBsum" id="1FND"/>
<dbReference type="PDBsum" id="1FRN"/>
<dbReference type="PDBsum" id="1FRQ"/>
<dbReference type="SMR" id="P00455"/>
<dbReference type="IntAct" id="P00455">
    <property type="interactions" value="2"/>
</dbReference>
<dbReference type="KEGG" id="ag:CAA30791"/>
<dbReference type="BRENDA" id="1.18.1.2">
    <property type="organism ID" value="5812"/>
</dbReference>
<dbReference type="BRENDA" id="1.19.1.1">
    <property type="organism ID" value="5812"/>
</dbReference>
<dbReference type="SABIO-RK" id="P00455"/>
<dbReference type="UniPathway" id="UPA00091"/>
<dbReference type="EvolutionaryTrace" id="P00455"/>
<dbReference type="Proteomes" id="UP001155700">
    <property type="component" value="Unplaced"/>
</dbReference>
<dbReference type="GO" id="GO:0009570">
    <property type="term" value="C:chloroplast stroma"/>
    <property type="evidence" value="ECO:0007669"/>
    <property type="project" value="UniProtKB-SubCell"/>
</dbReference>
<dbReference type="GO" id="GO:0098807">
    <property type="term" value="C:chloroplast thylakoid membrane protein complex"/>
    <property type="evidence" value="ECO:0000318"/>
    <property type="project" value="GO_Central"/>
</dbReference>
<dbReference type="GO" id="GO:0009055">
    <property type="term" value="F:electron transfer activity"/>
    <property type="evidence" value="ECO:0000318"/>
    <property type="project" value="GO_Central"/>
</dbReference>
<dbReference type="GO" id="GO:0004324">
    <property type="term" value="F:ferredoxin-NADP+ reductase activity"/>
    <property type="evidence" value="ECO:0007669"/>
    <property type="project" value="UniProtKB-EC"/>
</dbReference>
<dbReference type="GO" id="GO:0022900">
    <property type="term" value="P:electron transport chain"/>
    <property type="evidence" value="ECO:0000318"/>
    <property type="project" value="GO_Central"/>
</dbReference>
<dbReference type="GO" id="GO:0015979">
    <property type="term" value="P:photosynthesis"/>
    <property type="evidence" value="ECO:0007669"/>
    <property type="project" value="UniProtKB-UniPathway"/>
</dbReference>
<dbReference type="CDD" id="cd06208">
    <property type="entry name" value="CYPOR_like_FNR"/>
    <property type="match status" value="1"/>
</dbReference>
<dbReference type="FunFam" id="3.40.50.80:FF:000008">
    <property type="entry name" value="Ferredoxin--NADP reductase, chloroplastic"/>
    <property type="match status" value="1"/>
</dbReference>
<dbReference type="Gene3D" id="3.40.50.80">
    <property type="entry name" value="Nucleotide-binding domain of ferredoxin-NADP reductase (FNR) module"/>
    <property type="match status" value="1"/>
</dbReference>
<dbReference type="Gene3D" id="2.40.30.10">
    <property type="entry name" value="Translation factors"/>
    <property type="match status" value="1"/>
</dbReference>
<dbReference type="InterPro" id="IPR017927">
    <property type="entry name" value="FAD-bd_FR_type"/>
</dbReference>
<dbReference type="InterPro" id="IPR001709">
    <property type="entry name" value="Flavoprot_Pyr_Nucl_cyt_Rdtase"/>
</dbReference>
<dbReference type="InterPro" id="IPR015701">
    <property type="entry name" value="FNR"/>
</dbReference>
<dbReference type="InterPro" id="IPR039261">
    <property type="entry name" value="FNR_nucleotide-bd"/>
</dbReference>
<dbReference type="InterPro" id="IPR035442">
    <property type="entry name" value="FNR_plant_Cyanobacteria"/>
</dbReference>
<dbReference type="InterPro" id="IPR001433">
    <property type="entry name" value="OxRdtase_FAD/NAD-bd"/>
</dbReference>
<dbReference type="InterPro" id="IPR017938">
    <property type="entry name" value="Riboflavin_synthase-like_b-brl"/>
</dbReference>
<dbReference type="PANTHER" id="PTHR43314">
    <property type="match status" value="1"/>
</dbReference>
<dbReference type="Pfam" id="PF00175">
    <property type="entry name" value="NAD_binding_1"/>
    <property type="match status" value="1"/>
</dbReference>
<dbReference type="PIRSF" id="PIRSF501178">
    <property type="entry name" value="FNR-PetH"/>
    <property type="match status" value="1"/>
</dbReference>
<dbReference type="PIRSF" id="PIRSF000361">
    <property type="entry name" value="Frd-NADP+_RD"/>
    <property type="match status" value="1"/>
</dbReference>
<dbReference type="PRINTS" id="PR00371">
    <property type="entry name" value="FPNCR"/>
</dbReference>
<dbReference type="SUPFAM" id="SSF52343">
    <property type="entry name" value="Ferredoxin reductase-like, C-terminal NADP-linked domain"/>
    <property type="match status" value="1"/>
</dbReference>
<dbReference type="SUPFAM" id="SSF63380">
    <property type="entry name" value="Riboflavin synthase domain-like"/>
    <property type="match status" value="1"/>
</dbReference>
<dbReference type="PROSITE" id="PS51384">
    <property type="entry name" value="FAD_FR"/>
    <property type="match status" value="1"/>
</dbReference>
<organism>
    <name type="scientific">Spinacia oleracea</name>
    <name type="common">Spinach</name>
    <dbReference type="NCBI Taxonomy" id="3562"/>
    <lineage>
        <taxon>Eukaryota</taxon>
        <taxon>Viridiplantae</taxon>
        <taxon>Streptophyta</taxon>
        <taxon>Embryophyta</taxon>
        <taxon>Tracheophyta</taxon>
        <taxon>Spermatophyta</taxon>
        <taxon>Magnoliopsida</taxon>
        <taxon>eudicotyledons</taxon>
        <taxon>Gunneridae</taxon>
        <taxon>Pentapetalae</taxon>
        <taxon>Caryophyllales</taxon>
        <taxon>Chenopodiaceae</taxon>
        <taxon>Chenopodioideae</taxon>
        <taxon>Anserineae</taxon>
        <taxon>Spinacia</taxon>
    </lineage>
</organism>